<reference key="1">
    <citation type="submission" date="2009-04" db="EMBL/GenBank/DDBJ databases">
        <title>Genome sequence of Bacillus anthracis A0248.</title>
        <authorList>
            <person name="Dodson R.J."/>
            <person name="Munk A.C."/>
            <person name="Bruce D."/>
            <person name="Detter C."/>
            <person name="Tapia R."/>
            <person name="Sutton G."/>
            <person name="Sims D."/>
            <person name="Brettin T."/>
        </authorList>
    </citation>
    <scope>NUCLEOTIDE SEQUENCE [LARGE SCALE GENOMIC DNA]</scope>
    <source>
        <strain>A0248</strain>
    </source>
</reference>
<evidence type="ECO:0000255" key="1">
    <source>
        <dbReference type="HAMAP-Rule" id="MF_00391"/>
    </source>
</evidence>
<evidence type="ECO:0000256" key="2">
    <source>
        <dbReference type="SAM" id="MobiDB-lite"/>
    </source>
</evidence>
<evidence type="ECO:0000305" key="3"/>
<organism>
    <name type="scientific">Bacillus anthracis (strain A0248)</name>
    <dbReference type="NCBI Taxonomy" id="592021"/>
    <lineage>
        <taxon>Bacteria</taxon>
        <taxon>Bacillati</taxon>
        <taxon>Bacillota</taxon>
        <taxon>Bacilli</taxon>
        <taxon>Bacillales</taxon>
        <taxon>Bacillaceae</taxon>
        <taxon>Bacillus</taxon>
        <taxon>Bacillus cereus group</taxon>
    </lineage>
</organism>
<keyword id="KW-0687">Ribonucleoprotein</keyword>
<keyword id="KW-0689">Ribosomal protein</keyword>
<sequence>MKRTYQPNKRKRSKVHGFRSRMSTANGRKVLAARRRKGRKVLSA</sequence>
<protein>
    <recommendedName>
        <fullName evidence="1">Large ribosomal subunit protein bL34</fullName>
    </recommendedName>
    <alternativeName>
        <fullName evidence="3">50S ribosomal protein L34</fullName>
    </alternativeName>
</protein>
<comment type="similarity">
    <text evidence="1">Belongs to the bacterial ribosomal protein bL34 family.</text>
</comment>
<accession>C3P3F9</accession>
<name>RL34_BACAA</name>
<gene>
    <name evidence="1" type="primary">rpmH</name>
    <name type="ordered locus">BAA_5772</name>
</gene>
<feature type="chain" id="PRO_1000134422" description="Large ribosomal subunit protein bL34">
    <location>
        <begin position="1"/>
        <end position="44"/>
    </location>
</feature>
<feature type="region of interest" description="Disordered" evidence="2">
    <location>
        <begin position="1"/>
        <end position="44"/>
    </location>
</feature>
<feature type="compositionally biased region" description="Basic residues" evidence="2">
    <location>
        <begin position="1"/>
        <end position="19"/>
    </location>
</feature>
<feature type="compositionally biased region" description="Basic residues" evidence="2">
    <location>
        <begin position="31"/>
        <end position="44"/>
    </location>
</feature>
<proteinExistence type="inferred from homology"/>
<dbReference type="EMBL" id="CP001598">
    <property type="protein sequence ID" value="ACQ46012.1"/>
    <property type="molecule type" value="Genomic_DNA"/>
</dbReference>
<dbReference type="RefSeq" id="WP_000831901.1">
    <property type="nucleotide sequence ID" value="NC_012659.1"/>
</dbReference>
<dbReference type="SMR" id="C3P3F9"/>
<dbReference type="GeneID" id="93005634"/>
<dbReference type="KEGG" id="bai:BAA_5772"/>
<dbReference type="HOGENOM" id="CLU_129938_2_0_9"/>
<dbReference type="GO" id="GO:1990904">
    <property type="term" value="C:ribonucleoprotein complex"/>
    <property type="evidence" value="ECO:0007669"/>
    <property type="project" value="UniProtKB-KW"/>
</dbReference>
<dbReference type="GO" id="GO:0005840">
    <property type="term" value="C:ribosome"/>
    <property type="evidence" value="ECO:0007669"/>
    <property type="project" value="UniProtKB-KW"/>
</dbReference>
<dbReference type="GO" id="GO:0003735">
    <property type="term" value="F:structural constituent of ribosome"/>
    <property type="evidence" value="ECO:0007669"/>
    <property type="project" value="InterPro"/>
</dbReference>
<dbReference type="GO" id="GO:0006412">
    <property type="term" value="P:translation"/>
    <property type="evidence" value="ECO:0007669"/>
    <property type="project" value="UniProtKB-UniRule"/>
</dbReference>
<dbReference type="FunFam" id="1.10.287.3980:FF:000001">
    <property type="entry name" value="Mitochondrial ribosomal protein L34"/>
    <property type="match status" value="1"/>
</dbReference>
<dbReference type="Gene3D" id="1.10.287.3980">
    <property type="match status" value="1"/>
</dbReference>
<dbReference type="HAMAP" id="MF_00391">
    <property type="entry name" value="Ribosomal_bL34"/>
    <property type="match status" value="1"/>
</dbReference>
<dbReference type="InterPro" id="IPR000271">
    <property type="entry name" value="Ribosomal_bL34"/>
</dbReference>
<dbReference type="InterPro" id="IPR020939">
    <property type="entry name" value="Ribosomal_bL34_CS"/>
</dbReference>
<dbReference type="NCBIfam" id="TIGR01030">
    <property type="entry name" value="rpmH_bact"/>
    <property type="match status" value="1"/>
</dbReference>
<dbReference type="PANTHER" id="PTHR14503:SF4">
    <property type="entry name" value="LARGE RIBOSOMAL SUBUNIT PROTEIN BL34M"/>
    <property type="match status" value="1"/>
</dbReference>
<dbReference type="PANTHER" id="PTHR14503">
    <property type="entry name" value="MITOCHONDRIAL RIBOSOMAL PROTEIN 34 FAMILY MEMBER"/>
    <property type="match status" value="1"/>
</dbReference>
<dbReference type="Pfam" id="PF00468">
    <property type="entry name" value="Ribosomal_L34"/>
    <property type="match status" value="1"/>
</dbReference>
<dbReference type="PROSITE" id="PS00784">
    <property type="entry name" value="RIBOSOMAL_L34"/>
    <property type="match status" value="1"/>
</dbReference>